<organism>
    <name type="scientific">Listeria monocytogenes serotype 4b (strain F2365)</name>
    <dbReference type="NCBI Taxonomy" id="265669"/>
    <lineage>
        <taxon>Bacteria</taxon>
        <taxon>Bacillati</taxon>
        <taxon>Bacillota</taxon>
        <taxon>Bacilli</taxon>
        <taxon>Bacillales</taxon>
        <taxon>Listeriaceae</taxon>
        <taxon>Listeria</taxon>
    </lineage>
</organism>
<proteinExistence type="inferred from homology"/>
<reference key="1">
    <citation type="journal article" date="2004" name="Nucleic Acids Res.">
        <title>Whole genome comparisons of serotype 4b and 1/2a strains of the food-borne pathogen Listeria monocytogenes reveal new insights into the core genome components of this species.</title>
        <authorList>
            <person name="Nelson K.E."/>
            <person name="Fouts D.E."/>
            <person name="Mongodin E.F."/>
            <person name="Ravel J."/>
            <person name="DeBoy R.T."/>
            <person name="Kolonay J.F."/>
            <person name="Rasko D.A."/>
            <person name="Angiuoli S.V."/>
            <person name="Gill S.R."/>
            <person name="Paulsen I.T."/>
            <person name="Peterson J.D."/>
            <person name="White O."/>
            <person name="Nelson W.C."/>
            <person name="Nierman W.C."/>
            <person name="Beanan M.J."/>
            <person name="Brinkac L.M."/>
            <person name="Daugherty S.C."/>
            <person name="Dodson R.J."/>
            <person name="Durkin A.S."/>
            <person name="Madupu R."/>
            <person name="Haft D.H."/>
            <person name="Selengut J."/>
            <person name="Van Aken S.E."/>
            <person name="Khouri H.M."/>
            <person name="Fedorova N."/>
            <person name="Forberger H.A."/>
            <person name="Tran B."/>
            <person name="Kathariou S."/>
            <person name="Wonderling L.D."/>
            <person name="Uhlich G.A."/>
            <person name="Bayles D.O."/>
            <person name="Luchansky J.B."/>
            <person name="Fraser C.M."/>
        </authorList>
    </citation>
    <scope>NUCLEOTIDE SEQUENCE [LARGE SCALE GENOMIC DNA]</scope>
    <source>
        <strain>F2365</strain>
    </source>
</reference>
<comment type="function">
    <text evidence="1">Involved in control of chromosome replication initiation. Inhibits the cooperative binding of DnaA to the oriC region, thus negatively regulating initiation of chromosome replication. Inhibits the ability of DnaA-ATP to form a helix on DNA; does not disassemble preformed DnaA-DNA helices. Decreases the residence time of DnaA on the chromosome at its binding sites (oriC, replication forks and promoter-binding sites). Tethers DnaA to the replication machinery via the DNA polymerase beta sliding clamp subunit (dnaN). Associates with oriC and other DnaA targets on the chromosome in a DnaA-dependent manner.</text>
</comment>
<comment type="cofactor">
    <cofactor evidence="1">
        <name>Zn(2+)</name>
        <dbReference type="ChEBI" id="CHEBI:29105"/>
    </cofactor>
    <text evidence="1">Binds 1 zinc ion per subunit.</text>
</comment>
<comment type="subunit">
    <text evidence="1">Homotetramer. Interacts with both DnaA and DnaN, acting as a bridge between these two proteins.</text>
</comment>
<comment type="subcellular location">
    <subcellularLocation>
        <location evidence="1">Cytoplasm</location>
        <location evidence="1">Nucleoid</location>
    </subcellularLocation>
    <text evidence="1">Localizes in tight foci, which correspond to the replisome at mid-cell throughout the cell cycle.</text>
</comment>
<comment type="similarity">
    <text evidence="1">Belongs to the YabA family.</text>
</comment>
<accession>Q724P5</accession>
<keyword id="KW-0963">Cytoplasm</keyword>
<keyword id="KW-0235">DNA replication</keyword>
<keyword id="KW-0236">DNA replication inhibitor</keyword>
<keyword id="KW-0479">Metal-binding</keyword>
<keyword id="KW-0862">Zinc</keyword>
<protein>
    <recommendedName>
        <fullName evidence="1">Replication initiation control protein YabA</fullName>
    </recommendedName>
</protein>
<name>YABA_LISMF</name>
<sequence>MDKKAIFDSVSNMEEQIGELYQQLGDLKTNLGEMLEENNRLNLENEHLRRRLSLTDEATPEPKAEIEAEHGVMAPNRKEAMQQMIELGEGYDNLVQLYKEGFHVCNVHFGSPRGNDEDCLFCLSLLNKK</sequence>
<gene>
    <name evidence="1" type="primary">yabA</name>
    <name type="ordered locus">LMOf2365_0179</name>
</gene>
<feature type="chain" id="PRO_0000211912" description="Replication initiation control protein YabA">
    <location>
        <begin position="1"/>
        <end position="129"/>
    </location>
</feature>
<feature type="binding site" evidence="1">
    <location>
        <position position="103"/>
    </location>
    <ligand>
        <name>Zn(2+)</name>
        <dbReference type="ChEBI" id="CHEBI:29105"/>
    </ligand>
</feature>
<feature type="binding site" evidence="1">
    <location>
        <position position="105"/>
    </location>
    <ligand>
        <name>Zn(2+)</name>
        <dbReference type="ChEBI" id="CHEBI:29105"/>
    </ligand>
</feature>
<feature type="binding site" evidence="1">
    <location>
        <position position="119"/>
    </location>
    <ligand>
        <name>Zn(2+)</name>
        <dbReference type="ChEBI" id="CHEBI:29105"/>
    </ligand>
</feature>
<feature type="binding site" evidence="1">
    <location>
        <position position="122"/>
    </location>
    <ligand>
        <name>Zn(2+)</name>
        <dbReference type="ChEBI" id="CHEBI:29105"/>
    </ligand>
</feature>
<dbReference type="EMBL" id="AE017262">
    <property type="protein sequence ID" value="AAT02966.1"/>
    <property type="molecule type" value="Genomic_DNA"/>
</dbReference>
<dbReference type="RefSeq" id="WP_003728186.1">
    <property type="nucleotide sequence ID" value="NC_002973.6"/>
</dbReference>
<dbReference type="SMR" id="Q724P5"/>
<dbReference type="DNASU" id="2798651"/>
<dbReference type="KEGG" id="lmf:LMOf2365_0179"/>
<dbReference type="HOGENOM" id="CLU_157169_0_0_9"/>
<dbReference type="GO" id="GO:0009295">
    <property type="term" value="C:nucleoid"/>
    <property type="evidence" value="ECO:0007669"/>
    <property type="project" value="UniProtKB-SubCell"/>
</dbReference>
<dbReference type="GO" id="GO:0006260">
    <property type="term" value="P:DNA replication"/>
    <property type="evidence" value="ECO:0007669"/>
    <property type="project" value="UniProtKB-UniRule"/>
</dbReference>
<dbReference type="HAMAP" id="MF_01159">
    <property type="entry name" value="YabA"/>
    <property type="match status" value="1"/>
</dbReference>
<dbReference type="InterPro" id="IPR010377">
    <property type="entry name" value="YabA"/>
</dbReference>
<dbReference type="NCBIfam" id="NF009643">
    <property type="entry name" value="PRK13169.1-4"/>
    <property type="match status" value="1"/>
</dbReference>
<dbReference type="NCBIfam" id="NF009644">
    <property type="entry name" value="PRK13169.1-5"/>
    <property type="match status" value="1"/>
</dbReference>
<dbReference type="Pfam" id="PF06156">
    <property type="entry name" value="YabA"/>
    <property type="match status" value="1"/>
</dbReference>
<dbReference type="PIRSF" id="PIRSF021439">
    <property type="entry name" value="DUF972"/>
    <property type="match status" value="1"/>
</dbReference>
<evidence type="ECO:0000255" key="1">
    <source>
        <dbReference type="HAMAP-Rule" id="MF_01159"/>
    </source>
</evidence>